<protein>
    <recommendedName>
        <fullName evidence="1">Ribosome maturation factor RimP</fullName>
    </recommendedName>
</protein>
<feature type="chain" id="PRO_0000229222" description="Ribosome maturation factor RimP">
    <location>
        <begin position="1"/>
        <end position="145"/>
    </location>
</feature>
<proteinExistence type="inferred from homology"/>
<reference key="1">
    <citation type="journal article" date="2004" name="Nucleic Acids Res.">
        <title>Comparative analysis of the Borrelia garinii genome.</title>
        <authorList>
            <person name="Gloeckner G."/>
            <person name="Lehmann R."/>
            <person name="Romualdi A."/>
            <person name="Pradella S."/>
            <person name="Schulte-Spechtel U."/>
            <person name="Schilhabel M."/>
            <person name="Wilske B."/>
            <person name="Suehnel J."/>
            <person name="Platzer M."/>
        </authorList>
    </citation>
    <scope>NUCLEOTIDE SEQUENCE [LARGE SCALE GENOMIC DNA]</scope>
    <source>
        <strain>ATCC BAA-2496 / DSM 23469 / PBi</strain>
    </source>
</reference>
<keyword id="KW-0963">Cytoplasm</keyword>
<keyword id="KW-0690">Ribosome biogenesis</keyword>
<comment type="function">
    <text evidence="1">Required for maturation of 30S ribosomal subunits.</text>
</comment>
<comment type="subcellular location">
    <subcellularLocation>
        <location evidence="1">Cytoplasm</location>
    </subcellularLocation>
</comment>
<comment type="similarity">
    <text evidence="1">Belongs to the RimP family.</text>
</comment>
<sequence length="145" mass="16948">MIKCFDKNNEVYNLIKNLTERLNIEILEVNIFRNKNGGKIQIVLYSKDFSLGIDLLTDLHKMILLILEASLEYSFTLELSTPGIDRRIKSDREFQIFEGKKIKLMLDNEFEEGFILESKSKSFIFKTESKELNVSYSDVKKARLV</sequence>
<name>RIMP_BORGP</name>
<gene>
    <name evidence="1" type="primary">rimP</name>
    <name type="ordered locus">BG0825</name>
</gene>
<organism>
    <name type="scientific">Borrelia garinii subsp. bavariensis (strain ATCC BAA-2496 / DSM 23469 / PBi)</name>
    <name type="common">Borreliella bavariensis</name>
    <dbReference type="NCBI Taxonomy" id="290434"/>
    <lineage>
        <taxon>Bacteria</taxon>
        <taxon>Pseudomonadati</taxon>
        <taxon>Spirochaetota</taxon>
        <taxon>Spirochaetia</taxon>
        <taxon>Spirochaetales</taxon>
        <taxon>Borreliaceae</taxon>
        <taxon>Borreliella</taxon>
    </lineage>
</organism>
<evidence type="ECO:0000255" key="1">
    <source>
        <dbReference type="HAMAP-Rule" id="MF_01077"/>
    </source>
</evidence>
<accession>Q65ZX4</accession>
<dbReference type="EMBL" id="CP000013">
    <property type="protein sequence ID" value="AAU07647.1"/>
    <property type="molecule type" value="Genomic_DNA"/>
</dbReference>
<dbReference type="RefSeq" id="WP_011194092.1">
    <property type="nucleotide sequence ID" value="NZ_CP028872.1"/>
</dbReference>
<dbReference type="SMR" id="Q65ZX4"/>
<dbReference type="KEGG" id="bga:BG0825"/>
<dbReference type="eggNOG" id="COG0779">
    <property type="taxonomic scope" value="Bacteria"/>
</dbReference>
<dbReference type="HOGENOM" id="CLU_070525_4_1_12"/>
<dbReference type="OrthoDB" id="361904at2"/>
<dbReference type="Proteomes" id="UP000002276">
    <property type="component" value="Chromosome"/>
</dbReference>
<dbReference type="GO" id="GO:0005829">
    <property type="term" value="C:cytosol"/>
    <property type="evidence" value="ECO:0007669"/>
    <property type="project" value="TreeGrafter"/>
</dbReference>
<dbReference type="GO" id="GO:0000028">
    <property type="term" value="P:ribosomal small subunit assembly"/>
    <property type="evidence" value="ECO:0007669"/>
    <property type="project" value="TreeGrafter"/>
</dbReference>
<dbReference type="GO" id="GO:0006412">
    <property type="term" value="P:translation"/>
    <property type="evidence" value="ECO:0007669"/>
    <property type="project" value="TreeGrafter"/>
</dbReference>
<dbReference type="HAMAP" id="MF_01077">
    <property type="entry name" value="RimP"/>
    <property type="match status" value="1"/>
</dbReference>
<dbReference type="InterPro" id="IPR003728">
    <property type="entry name" value="Ribosome_maturation_RimP"/>
</dbReference>
<dbReference type="InterPro" id="IPR028989">
    <property type="entry name" value="RimP_N"/>
</dbReference>
<dbReference type="InterPro" id="IPR035956">
    <property type="entry name" value="RimP_N_sf"/>
</dbReference>
<dbReference type="NCBIfam" id="NF011223">
    <property type="entry name" value="PRK14630.1"/>
    <property type="match status" value="1"/>
</dbReference>
<dbReference type="PANTHER" id="PTHR33867">
    <property type="entry name" value="RIBOSOME MATURATION FACTOR RIMP"/>
    <property type="match status" value="1"/>
</dbReference>
<dbReference type="PANTHER" id="PTHR33867:SF1">
    <property type="entry name" value="RIBOSOME MATURATION FACTOR RIMP"/>
    <property type="match status" value="1"/>
</dbReference>
<dbReference type="Pfam" id="PF02576">
    <property type="entry name" value="RimP_N"/>
    <property type="match status" value="1"/>
</dbReference>
<dbReference type="SUPFAM" id="SSF75420">
    <property type="entry name" value="YhbC-like, N-terminal domain"/>
    <property type="match status" value="1"/>
</dbReference>